<sequence>MKVRPSVKKICEKCKVIKRHGKVMVICENPKHKQRQG</sequence>
<accession>B8G1Z0</accession>
<evidence type="ECO:0000255" key="1">
    <source>
        <dbReference type="HAMAP-Rule" id="MF_00251"/>
    </source>
</evidence>
<evidence type="ECO:0000305" key="2"/>
<protein>
    <recommendedName>
        <fullName evidence="1">Large ribosomal subunit protein bL36</fullName>
    </recommendedName>
    <alternativeName>
        <fullName evidence="2">50S ribosomal protein L36</fullName>
    </alternativeName>
</protein>
<keyword id="KW-0687">Ribonucleoprotein</keyword>
<keyword id="KW-0689">Ribosomal protein</keyword>
<organism>
    <name type="scientific">Desulfitobacterium hafniense (strain DSM 10664 / DCB-2)</name>
    <dbReference type="NCBI Taxonomy" id="272564"/>
    <lineage>
        <taxon>Bacteria</taxon>
        <taxon>Bacillati</taxon>
        <taxon>Bacillota</taxon>
        <taxon>Clostridia</taxon>
        <taxon>Eubacteriales</taxon>
        <taxon>Desulfitobacteriaceae</taxon>
        <taxon>Desulfitobacterium</taxon>
    </lineage>
</organism>
<gene>
    <name evidence="1" type="primary">rpmJ</name>
    <name type="ordered locus">Dhaf_0446</name>
</gene>
<name>RL36_DESHD</name>
<comment type="similarity">
    <text evidence="1">Belongs to the bacterial ribosomal protein bL36 family.</text>
</comment>
<feature type="chain" id="PRO_1000196185" description="Large ribosomal subunit protein bL36">
    <location>
        <begin position="1"/>
        <end position="37"/>
    </location>
</feature>
<dbReference type="EMBL" id="CP001336">
    <property type="protein sequence ID" value="ACL18513.1"/>
    <property type="molecule type" value="Genomic_DNA"/>
</dbReference>
<dbReference type="RefSeq" id="WP_005810119.1">
    <property type="nucleotide sequence ID" value="NC_011830.1"/>
</dbReference>
<dbReference type="SMR" id="B8G1Z0"/>
<dbReference type="KEGG" id="dhd:Dhaf_0446"/>
<dbReference type="HOGENOM" id="CLU_135723_6_2_9"/>
<dbReference type="Proteomes" id="UP000007726">
    <property type="component" value="Chromosome"/>
</dbReference>
<dbReference type="GO" id="GO:0005737">
    <property type="term" value="C:cytoplasm"/>
    <property type="evidence" value="ECO:0007669"/>
    <property type="project" value="UniProtKB-ARBA"/>
</dbReference>
<dbReference type="GO" id="GO:1990904">
    <property type="term" value="C:ribonucleoprotein complex"/>
    <property type="evidence" value="ECO:0007669"/>
    <property type="project" value="UniProtKB-KW"/>
</dbReference>
<dbReference type="GO" id="GO:0005840">
    <property type="term" value="C:ribosome"/>
    <property type="evidence" value="ECO:0007669"/>
    <property type="project" value="UniProtKB-KW"/>
</dbReference>
<dbReference type="GO" id="GO:0003735">
    <property type="term" value="F:structural constituent of ribosome"/>
    <property type="evidence" value="ECO:0007669"/>
    <property type="project" value="InterPro"/>
</dbReference>
<dbReference type="GO" id="GO:0006412">
    <property type="term" value="P:translation"/>
    <property type="evidence" value="ECO:0007669"/>
    <property type="project" value="UniProtKB-UniRule"/>
</dbReference>
<dbReference type="HAMAP" id="MF_00251">
    <property type="entry name" value="Ribosomal_bL36"/>
    <property type="match status" value="1"/>
</dbReference>
<dbReference type="InterPro" id="IPR000473">
    <property type="entry name" value="Ribosomal_bL36"/>
</dbReference>
<dbReference type="InterPro" id="IPR035977">
    <property type="entry name" value="Ribosomal_bL36_sp"/>
</dbReference>
<dbReference type="NCBIfam" id="TIGR01022">
    <property type="entry name" value="rpmJ_bact"/>
    <property type="match status" value="1"/>
</dbReference>
<dbReference type="PANTHER" id="PTHR42888">
    <property type="entry name" value="50S RIBOSOMAL PROTEIN L36, CHLOROPLASTIC"/>
    <property type="match status" value="1"/>
</dbReference>
<dbReference type="PANTHER" id="PTHR42888:SF1">
    <property type="entry name" value="LARGE RIBOSOMAL SUBUNIT PROTEIN BL36C"/>
    <property type="match status" value="1"/>
</dbReference>
<dbReference type="Pfam" id="PF00444">
    <property type="entry name" value="Ribosomal_L36"/>
    <property type="match status" value="1"/>
</dbReference>
<dbReference type="SUPFAM" id="SSF57840">
    <property type="entry name" value="Ribosomal protein L36"/>
    <property type="match status" value="1"/>
</dbReference>
<dbReference type="PROSITE" id="PS00828">
    <property type="entry name" value="RIBOSOMAL_L36"/>
    <property type="match status" value="1"/>
</dbReference>
<reference key="1">
    <citation type="journal article" date="2012" name="BMC Microbiol.">
        <title>Genome sequence of Desulfitobacterium hafniense DCB-2, a Gram-positive anaerobe capable of dehalogenation and metal reduction.</title>
        <authorList>
            <person name="Kim S.H."/>
            <person name="Harzman C."/>
            <person name="Davis J.K."/>
            <person name="Hutcheson R."/>
            <person name="Broderick J.B."/>
            <person name="Marsh T.L."/>
            <person name="Tiedje J.M."/>
        </authorList>
    </citation>
    <scope>NUCLEOTIDE SEQUENCE [LARGE SCALE GENOMIC DNA]</scope>
    <source>
        <strain>DSM 10664 / DCB-2</strain>
    </source>
</reference>
<proteinExistence type="inferred from homology"/>